<keyword id="KW-0963">Cytoplasm</keyword>
<keyword id="KW-0648">Protein biosynthesis</keyword>
<keyword id="KW-0663">Pyridoxal phosphate</keyword>
<keyword id="KW-1185">Reference proteome</keyword>
<keyword id="KW-0711">Selenium</keyword>
<keyword id="KW-0808">Transferase</keyword>
<comment type="function">
    <text evidence="1">Converts seryl-tRNA(Sec) to selenocysteinyl-tRNA(Sec) required for selenoprotein biosynthesis.</text>
</comment>
<comment type="catalytic activity">
    <reaction evidence="1">
        <text>L-seryl-tRNA(Sec) + selenophosphate + H(+) = L-selenocysteinyl-tRNA(Sec) + phosphate</text>
        <dbReference type="Rhea" id="RHEA:22728"/>
        <dbReference type="Rhea" id="RHEA-COMP:9742"/>
        <dbReference type="Rhea" id="RHEA-COMP:9743"/>
        <dbReference type="ChEBI" id="CHEBI:15378"/>
        <dbReference type="ChEBI" id="CHEBI:16144"/>
        <dbReference type="ChEBI" id="CHEBI:43474"/>
        <dbReference type="ChEBI" id="CHEBI:78533"/>
        <dbReference type="ChEBI" id="CHEBI:78573"/>
        <dbReference type="EC" id="2.9.1.1"/>
    </reaction>
</comment>
<comment type="cofactor">
    <cofactor evidence="1">
        <name>pyridoxal 5'-phosphate</name>
        <dbReference type="ChEBI" id="CHEBI:597326"/>
    </cofactor>
</comment>
<comment type="pathway">
    <text evidence="1">Aminoacyl-tRNA biosynthesis; selenocysteinyl-tRNA(Sec) biosynthesis; selenocysteinyl-tRNA(Sec) from L-seryl-tRNA(Sec) (bacterial route): step 1/1.</text>
</comment>
<comment type="subcellular location">
    <subcellularLocation>
        <location evidence="1">Cytoplasm</location>
    </subcellularLocation>
</comment>
<comment type="similarity">
    <text evidence="1">Belongs to the SelA family.</text>
</comment>
<proteinExistence type="inferred from homology"/>
<reference key="1">
    <citation type="journal article" date="2007" name="Genome Res.">
        <title>Genome sequence of a proteolytic (Group I) Clostridium botulinum strain Hall A and comparative analysis of the clostridial genomes.</title>
        <authorList>
            <person name="Sebaihia M."/>
            <person name="Peck M.W."/>
            <person name="Minton N.P."/>
            <person name="Thomson N.R."/>
            <person name="Holden M.T.G."/>
            <person name="Mitchell W.J."/>
            <person name="Carter A.T."/>
            <person name="Bentley S.D."/>
            <person name="Mason D.R."/>
            <person name="Crossman L."/>
            <person name="Paul C.J."/>
            <person name="Ivens A."/>
            <person name="Wells-Bennik M.H.J."/>
            <person name="Davis I.J."/>
            <person name="Cerdeno-Tarraga A.M."/>
            <person name="Churcher C."/>
            <person name="Quail M.A."/>
            <person name="Chillingworth T."/>
            <person name="Feltwell T."/>
            <person name="Fraser A."/>
            <person name="Goodhead I."/>
            <person name="Hance Z."/>
            <person name="Jagels K."/>
            <person name="Larke N."/>
            <person name="Maddison M."/>
            <person name="Moule S."/>
            <person name="Mungall K."/>
            <person name="Norbertczak H."/>
            <person name="Rabbinowitsch E."/>
            <person name="Sanders M."/>
            <person name="Simmonds M."/>
            <person name="White B."/>
            <person name="Whithead S."/>
            <person name="Parkhill J."/>
        </authorList>
    </citation>
    <scope>NUCLEOTIDE SEQUENCE [LARGE SCALE GENOMIC DNA]</scope>
    <source>
        <strain>Hall / ATCC 3502 / NCTC 13319 / Type A</strain>
    </source>
</reference>
<reference key="2">
    <citation type="journal article" date="2007" name="PLoS ONE">
        <title>Analysis of the neurotoxin complex genes in Clostridium botulinum A1-A4 and B1 strains: BoNT/A3, /Ba4 and /B1 clusters are located within plasmids.</title>
        <authorList>
            <person name="Smith T.J."/>
            <person name="Hill K.K."/>
            <person name="Foley B.T."/>
            <person name="Detter J.C."/>
            <person name="Munk A.C."/>
            <person name="Bruce D.C."/>
            <person name="Doggett N.A."/>
            <person name="Smith L.A."/>
            <person name="Marks J.D."/>
            <person name="Xie G."/>
            <person name="Brettin T.S."/>
        </authorList>
    </citation>
    <scope>NUCLEOTIDE SEQUENCE [LARGE SCALE GENOMIC DNA]</scope>
    <source>
        <strain>Hall / ATCC 3502 / NCTC 13319 / Type A</strain>
    </source>
</reference>
<evidence type="ECO:0000255" key="1">
    <source>
        <dbReference type="HAMAP-Rule" id="MF_00423"/>
    </source>
</evidence>
<accession>A5I656</accession>
<accession>A7G7D9</accession>
<organism>
    <name type="scientific">Clostridium botulinum (strain Hall / ATCC 3502 / NCTC 13319 / Type A)</name>
    <dbReference type="NCBI Taxonomy" id="441771"/>
    <lineage>
        <taxon>Bacteria</taxon>
        <taxon>Bacillati</taxon>
        <taxon>Bacillota</taxon>
        <taxon>Clostridia</taxon>
        <taxon>Eubacteriales</taxon>
        <taxon>Clostridiaceae</taxon>
        <taxon>Clostridium</taxon>
    </lineage>
</organism>
<protein>
    <recommendedName>
        <fullName evidence="1">L-seryl-tRNA(Sec) selenium transferase</fullName>
        <ecNumber evidence="1">2.9.1.1</ecNumber>
    </recommendedName>
    <alternativeName>
        <fullName evidence="1">Selenocysteine synthase</fullName>
        <shortName evidence="1">Sec synthase</shortName>
    </alternativeName>
    <alternativeName>
        <fullName evidence="1">Selenocysteinyl-tRNA(Sec) synthase</fullName>
    </alternativeName>
</protein>
<sequence>MDKKQLLRNLPKIDELLKEEIVNRYLQENSRTLVVDSLRQSIDYYRGEILKNNIDSFTKENVVNYFIDTLEENKSTKFKKVINATGVVIHTNLGRSLLAKEAIENVVKVSENYSNLEYDLKEGKRGSRYSHVEELIKKVTGAEAAMVVNNNAAAVMLALNTLCEEREAIVSRGQLVEIGGSFRVPDVMKFSRAHLVEVGTTNRTHLYDYENNINENTGVLLKVHTSNFKIMGFTEEVSSEEMVQLGGKYKLPVMEDIGSGTLVDFSKYGFTYEPTVQSSLEKGVDVVTFSGDKMLGGPQAGIIVGKKKYIDKMKKNQLTRALRIDKMTLAALEGTLKCYIDEKEAIENIPTLNMILSSKDIHKKRAQRLKRRLQNNVKDFNFKVSEDLSMVGGGSMPGERIPTYVVKVNSDKITAEKIEEKLRLSKNPIIVRVSKDEVILDVRTLFERDFNIIVEEFKKLLK</sequence>
<gene>
    <name evidence="1" type="primary">selA</name>
    <name type="ordered locus">CBO2976</name>
    <name type="ordered locus">CLC_2873</name>
</gene>
<dbReference type="EC" id="2.9.1.1" evidence="1"/>
<dbReference type="EMBL" id="CP000727">
    <property type="protein sequence ID" value="ABS39065.1"/>
    <property type="molecule type" value="Genomic_DNA"/>
</dbReference>
<dbReference type="EMBL" id="AM412317">
    <property type="protein sequence ID" value="CAL84538.1"/>
    <property type="molecule type" value="Genomic_DNA"/>
</dbReference>
<dbReference type="RefSeq" id="WP_012048015.1">
    <property type="nucleotide sequence ID" value="NC_009698.1"/>
</dbReference>
<dbReference type="RefSeq" id="YP_001255468.1">
    <property type="nucleotide sequence ID" value="NC_009495.1"/>
</dbReference>
<dbReference type="RefSeq" id="YP_001388704.1">
    <property type="nucleotide sequence ID" value="NC_009698.1"/>
</dbReference>
<dbReference type="SMR" id="A5I656"/>
<dbReference type="GeneID" id="5187374"/>
<dbReference type="KEGG" id="cbh:CLC_2873"/>
<dbReference type="KEGG" id="cbo:CBO2976"/>
<dbReference type="PATRIC" id="fig|413999.7.peg.2954"/>
<dbReference type="HOGENOM" id="CLU_038142_1_0_9"/>
<dbReference type="UniPathway" id="UPA00906">
    <property type="reaction ID" value="UER00896"/>
</dbReference>
<dbReference type="PRO" id="PR:A5I656"/>
<dbReference type="Proteomes" id="UP000001986">
    <property type="component" value="Chromosome"/>
</dbReference>
<dbReference type="GO" id="GO:0005737">
    <property type="term" value="C:cytoplasm"/>
    <property type="evidence" value="ECO:0007669"/>
    <property type="project" value="UniProtKB-SubCell"/>
</dbReference>
<dbReference type="GO" id="GO:0004125">
    <property type="term" value="F:L-seryl-tRNA(Sec) selenium transferase activity"/>
    <property type="evidence" value="ECO:0000318"/>
    <property type="project" value="GO_Central"/>
</dbReference>
<dbReference type="GO" id="GO:0001717">
    <property type="term" value="P:conversion of seryl-tRNAsec to selenocys-tRNAsec"/>
    <property type="evidence" value="ECO:0007669"/>
    <property type="project" value="UniProtKB-UniRule"/>
</dbReference>
<dbReference type="GO" id="GO:0001514">
    <property type="term" value="P:selenocysteine incorporation"/>
    <property type="evidence" value="ECO:0007669"/>
    <property type="project" value="UniProtKB-UniRule"/>
</dbReference>
<dbReference type="FunFam" id="3.40.640.10:FF:000028">
    <property type="entry name" value="L-seryl-tRNA(Sec) selenium transferase"/>
    <property type="match status" value="1"/>
</dbReference>
<dbReference type="Gene3D" id="3.90.1150.180">
    <property type="match status" value="1"/>
</dbReference>
<dbReference type="Gene3D" id="3.40.640.10">
    <property type="entry name" value="Type I PLP-dependent aspartate aminotransferase-like (Major domain)"/>
    <property type="match status" value="1"/>
</dbReference>
<dbReference type="HAMAP" id="MF_00423">
    <property type="entry name" value="SelA"/>
    <property type="match status" value="1"/>
</dbReference>
<dbReference type="InterPro" id="IPR015424">
    <property type="entry name" value="PyrdxlP-dep_Trfase"/>
</dbReference>
<dbReference type="InterPro" id="IPR015421">
    <property type="entry name" value="PyrdxlP-dep_Trfase_major"/>
</dbReference>
<dbReference type="InterPro" id="IPR018319">
    <property type="entry name" value="SelA-like"/>
</dbReference>
<dbReference type="InterPro" id="IPR004534">
    <property type="entry name" value="SelA_trans"/>
</dbReference>
<dbReference type="InterPro" id="IPR025862">
    <property type="entry name" value="SelA_trans_N_dom"/>
</dbReference>
<dbReference type="NCBIfam" id="TIGR00474">
    <property type="entry name" value="selA"/>
    <property type="match status" value="1"/>
</dbReference>
<dbReference type="PANTHER" id="PTHR32328">
    <property type="entry name" value="L-SERYL-TRNA(SEC) SELENIUM TRANSFERASE"/>
    <property type="match status" value="1"/>
</dbReference>
<dbReference type="PANTHER" id="PTHR32328:SF0">
    <property type="entry name" value="L-SERYL-TRNA(SEC) SELENIUM TRANSFERASE"/>
    <property type="match status" value="1"/>
</dbReference>
<dbReference type="Pfam" id="PF12390">
    <property type="entry name" value="Se-cys_synth_N"/>
    <property type="match status" value="1"/>
</dbReference>
<dbReference type="Pfam" id="PF03841">
    <property type="entry name" value="SelA"/>
    <property type="match status" value="1"/>
</dbReference>
<dbReference type="SUPFAM" id="SSF53383">
    <property type="entry name" value="PLP-dependent transferases"/>
    <property type="match status" value="1"/>
</dbReference>
<name>SELA_CLOBH</name>
<feature type="chain" id="PRO_1000072305" description="L-seryl-tRNA(Sec) selenium transferase">
    <location>
        <begin position="1"/>
        <end position="462"/>
    </location>
</feature>
<feature type="modified residue" description="N6-(pyridoxal phosphate)lysine" evidence="1">
    <location>
        <position position="293"/>
    </location>
</feature>